<comment type="function">
    <text evidence="1">Catalyzes the synthesis of the hydroxymethylpyrimidine phosphate (HMP-P) moiety of thiamine from aminoimidazole ribotide (AIR) in a radical S-adenosyl-L-methionine (SAM)-dependent reaction.</text>
</comment>
<comment type="catalytic activity">
    <reaction evidence="1">
        <text>5-amino-1-(5-phospho-beta-D-ribosyl)imidazole + S-adenosyl-L-methionine = 4-amino-2-methyl-5-(phosphooxymethyl)pyrimidine + CO + 5'-deoxyadenosine + formate + L-methionine + 3 H(+)</text>
        <dbReference type="Rhea" id="RHEA:24840"/>
        <dbReference type="ChEBI" id="CHEBI:15378"/>
        <dbReference type="ChEBI" id="CHEBI:15740"/>
        <dbReference type="ChEBI" id="CHEBI:17245"/>
        <dbReference type="ChEBI" id="CHEBI:17319"/>
        <dbReference type="ChEBI" id="CHEBI:57844"/>
        <dbReference type="ChEBI" id="CHEBI:58354"/>
        <dbReference type="ChEBI" id="CHEBI:59789"/>
        <dbReference type="ChEBI" id="CHEBI:137981"/>
        <dbReference type="EC" id="4.1.99.17"/>
    </reaction>
</comment>
<comment type="cofactor">
    <cofactor evidence="1">
        <name>[4Fe-4S] cluster</name>
        <dbReference type="ChEBI" id="CHEBI:49883"/>
    </cofactor>
    <text evidence="1">Binds 1 [4Fe-4S] cluster per subunit. The cluster is coordinated with 3 cysteines and an exchangeable S-adenosyl-L-methionine.</text>
</comment>
<comment type="pathway">
    <text evidence="1">Cofactor biosynthesis; thiamine diphosphate biosynthesis.</text>
</comment>
<comment type="similarity">
    <text evidence="1">Belongs to the ThiC family.</text>
</comment>
<feature type="chain" id="PRO_0000152786" description="Phosphomethylpyrimidine synthase">
    <location>
        <begin position="1"/>
        <end position="565"/>
    </location>
</feature>
<feature type="binding site" evidence="1">
    <location>
        <position position="203"/>
    </location>
    <ligand>
        <name>substrate</name>
    </ligand>
</feature>
<feature type="binding site" evidence="1">
    <location>
        <position position="232"/>
    </location>
    <ligand>
        <name>substrate</name>
    </ligand>
</feature>
<feature type="binding site" evidence="1">
    <location>
        <position position="261"/>
    </location>
    <ligand>
        <name>substrate</name>
    </ligand>
</feature>
<feature type="binding site" evidence="1">
    <location>
        <position position="297"/>
    </location>
    <ligand>
        <name>substrate</name>
    </ligand>
</feature>
<feature type="binding site" evidence="1">
    <location>
        <begin position="317"/>
        <end position="319"/>
    </location>
    <ligand>
        <name>substrate</name>
    </ligand>
</feature>
<feature type="binding site" evidence="1">
    <location>
        <begin position="358"/>
        <end position="361"/>
    </location>
    <ligand>
        <name>substrate</name>
    </ligand>
</feature>
<feature type="binding site" evidence="1">
    <location>
        <position position="397"/>
    </location>
    <ligand>
        <name>substrate</name>
    </ligand>
</feature>
<feature type="binding site" evidence="1">
    <location>
        <position position="401"/>
    </location>
    <ligand>
        <name>Zn(2+)</name>
        <dbReference type="ChEBI" id="CHEBI:29105"/>
    </ligand>
</feature>
<feature type="binding site" evidence="1">
    <location>
        <position position="424"/>
    </location>
    <ligand>
        <name>substrate</name>
    </ligand>
</feature>
<feature type="binding site" evidence="1">
    <location>
        <position position="465"/>
    </location>
    <ligand>
        <name>Zn(2+)</name>
        <dbReference type="ChEBI" id="CHEBI:29105"/>
    </ligand>
</feature>
<feature type="binding site" evidence="1">
    <location>
        <position position="541"/>
    </location>
    <ligand>
        <name>[4Fe-4S] cluster</name>
        <dbReference type="ChEBI" id="CHEBI:49883"/>
        <note>4Fe-4S-S-AdoMet</note>
    </ligand>
</feature>
<feature type="binding site" evidence="1">
    <location>
        <position position="544"/>
    </location>
    <ligand>
        <name>[4Fe-4S] cluster</name>
        <dbReference type="ChEBI" id="CHEBI:49883"/>
        <note>4Fe-4S-S-AdoMet</note>
    </ligand>
</feature>
<feature type="binding site" evidence="1">
    <location>
        <position position="549"/>
    </location>
    <ligand>
        <name>[4Fe-4S] cluster</name>
        <dbReference type="ChEBI" id="CHEBI:49883"/>
        <note>4Fe-4S-S-AdoMet</note>
    </ligand>
</feature>
<protein>
    <recommendedName>
        <fullName evidence="1">Phosphomethylpyrimidine synthase</fullName>
        <ecNumber evidence="1">4.1.99.17</ecNumber>
    </recommendedName>
    <alternativeName>
        <fullName evidence="1">Hydroxymethylpyrimidine phosphate synthase</fullName>
        <shortName evidence="1">HMP-P synthase</shortName>
        <shortName evidence="1">HMP-phosphate synthase</shortName>
        <shortName evidence="1">HMPP synthase</shortName>
    </alternativeName>
    <alternativeName>
        <fullName evidence="1">Thiamine biosynthesis protein ThiC</fullName>
    </alternativeName>
</protein>
<evidence type="ECO:0000255" key="1">
    <source>
        <dbReference type="HAMAP-Rule" id="MF_00089"/>
    </source>
</evidence>
<name>THIC_BACTN</name>
<gene>
    <name evidence="1" type="primary">thiC</name>
    <name type="ordered locus">BT_0650</name>
</gene>
<accession>Q8AA15</accession>
<dbReference type="EC" id="4.1.99.17" evidence="1"/>
<dbReference type="EMBL" id="AE015928">
    <property type="protein sequence ID" value="AAO75757.1"/>
    <property type="molecule type" value="Genomic_DNA"/>
</dbReference>
<dbReference type="RefSeq" id="NP_809563.1">
    <property type="nucleotide sequence ID" value="NC_004663.1"/>
</dbReference>
<dbReference type="RefSeq" id="WP_011107372.1">
    <property type="nucleotide sequence ID" value="NC_004663.1"/>
</dbReference>
<dbReference type="SMR" id="Q8AA15"/>
<dbReference type="FunCoup" id="Q8AA15">
    <property type="interactions" value="434"/>
</dbReference>
<dbReference type="STRING" id="226186.BT_0650"/>
<dbReference type="PaxDb" id="226186-BT_0650"/>
<dbReference type="EnsemblBacteria" id="AAO75757">
    <property type="protein sequence ID" value="AAO75757"/>
    <property type="gene ID" value="BT_0650"/>
</dbReference>
<dbReference type="GeneID" id="60926611"/>
<dbReference type="KEGG" id="bth:BT_0650"/>
<dbReference type="PATRIC" id="fig|226186.12.peg.661"/>
<dbReference type="eggNOG" id="COG0422">
    <property type="taxonomic scope" value="Bacteria"/>
</dbReference>
<dbReference type="HOGENOM" id="CLU_013181_2_1_10"/>
<dbReference type="InParanoid" id="Q8AA15"/>
<dbReference type="OrthoDB" id="9805897at2"/>
<dbReference type="UniPathway" id="UPA00060"/>
<dbReference type="Proteomes" id="UP000001414">
    <property type="component" value="Chromosome"/>
</dbReference>
<dbReference type="GO" id="GO:0005829">
    <property type="term" value="C:cytosol"/>
    <property type="evidence" value="ECO:0000318"/>
    <property type="project" value="GO_Central"/>
</dbReference>
<dbReference type="GO" id="GO:0051539">
    <property type="term" value="F:4 iron, 4 sulfur cluster binding"/>
    <property type="evidence" value="ECO:0007669"/>
    <property type="project" value="UniProtKB-KW"/>
</dbReference>
<dbReference type="GO" id="GO:0016830">
    <property type="term" value="F:carbon-carbon lyase activity"/>
    <property type="evidence" value="ECO:0007669"/>
    <property type="project" value="InterPro"/>
</dbReference>
<dbReference type="GO" id="GO:0008270">
    <property type="term" value="F:zinc ion binding"/>
    <property type="evidence" value="ECO:0007669"/>
    <property type="project" value="UniProtKB-UniRule"/>
</dbReference>
<dbReference type="GO" id="GO:0009228">
    <property type="term" value="P:thiamine biosynthetic process"/>
    <property type="evidence" value="ECO:0000318"/>
    <property type="project" value="GO_Central"/>
</dbReference>
<dbReference type="GO" id="GO:0009229">
    <property type="term" value="P:thiamine diphosphate biosynthetic process"/>
    <property type="evidence" value="ECO:0007669"/>
    <property type="project" value="UniProtKB-UniRule"/>
</dbReference>
<dbReference type="FunFam" id="3.20.20.540:FF:000001">
    <property type="entry name" value="Phosphomethylpyrimidine synthase"/>
    <property type="match status" value="1"/>
</dbReference>
<dbReference type="Gene3D" id="6.10.250.620">
    <property type="match status" value="1"/>
</dbReference>
<dbReference type="Gene3D" id="3.20.20.540">
    <property type="entry name" value="Radical SAM ThiC family, central domain"/>
    <property type="match status" value="1"/>
</dbReference>
<dbReference type="HAMAP" id="MF_00089">
    <property type="entry name" value="ThiC"/>
    <property type="match status" value="1"/>
</dbReference>
<dbReference type="InterPro" id="IPR037509">
    <property type="entry name" value="ThiC"/>
</dbReference>
<dbReference type="InterPro" id="IPR025747">
    <property type="entry name" value="ThiC-associated_dom"/>
</dbReference>
<dbReference type="InterPro" id="IPR038521">
    <property type="entry name" value="ThiC/Bza_core_dom"/>
</dbReference>
<dbReference type="InterPro" id="IPR002817">
    <property type="entry name" value="ThiC/BzaA/B"/>
</dbReference>
<dbReference type="NCBIfam" id="NF006763">
    <property type="entry name" value="PRK09284.1"/>
    <property type="match status" value="1"/>
</dbReference>
<dbReference type="NCBIfam" id="NF009895">
    <property type="entry name" value="PRK13352.1"/>
    <property type="match status" value="1"/>
</dbReference>
<dbReference type="NCBIfam" id="TIGR00190">
    <property type="entry name" value="thiC"/>
    <property type="match status" value="1"/>
</dbReference>
<dbReference type="PANTHER" id="PTHR30557:SF1">
    <property type="entry name" value="PHOSPHOMETHYLPYRIMIDINE SYNTHASE, CHLOROPLASTIC"/>
    <property type="match status" value="1"/>
</dbReference>
<dbReference type="PANTHER" id="PTHR30557">
    <property type="entry name" value="THIAMINE BIOSYNTHESIS PROTEIN THIC"/>
    <property type="match status" value="1"/>
</dbReference>
<dbReference type="Pfam" id="PF13667">
    <property type="entry name" value="ThiC-associated"/>
    <property type="match status" value="1"/>
</dbReference>
<dbReference type="Pfam" id="PF01964">
    <property type="entry name" value="ThiC_Rad_SAM"/>
    <property type="match status" value="1"/>
</dbReference>
<dbReference type="SFLD" id="SFLDF00407">
    <property type="entry name" value="phosphomethylpyrimidine_syntha"/>
    <property type="match status" value="1"/>
</dbReference>
<dbReference type="SFLD" id="SFLDG01114">
    <property type="entry name" value="phosphomethylpyrimidine_syntha"/>
    <property type="match status" value="1"/>
</dbReference>
<dbReference type="SFLD" id="SFLDS00113">
    <property type="entry name" value="Radical_SAM_Phosphomethylpyrim"/>
    <property type="match status" value="1"/>
</dbReference>
<keyword id="KW-0004">4Fe-4S</keyword>
<keyword id="KW-0408">Iron</keyword>
<keyword id="KW-0411">Iron-sulfur</keyword>
<keyword id="KW-0456">Lyase</keyword>
<keyword id="KW-0479">Metal-binding</keyword>
<keyword id="KW-1185">Reference proteome</keyword>
<keyword id="KW-0949">S-adenosyl-L-methionine</keyword>
<keyword id="KW-0784">Thiamine biosynthesis</keyword>
<keyword id="KW-0862">Zinc</keyword>
<proteinExistence type="inferred from homology"/>
<organism>
    <name type="scientific">Bacteroides thetaiotaomicron (strain ATCC 29148 / DSM 2079 / JCM 5827 / CCUG 10774 / NCTC 10582 / VPI-5482 / E50)</name>
    <dbReference type="NCBI Taxonomy" id="226186"/>
    <lineage>
        <taxon>Bacteria</taxon>
        <taxon>Pseudomonadati</taxon>
        <taxon>Bacteroidota</taxon>
        <taxon>Bacteroidia</taxon>
        <taxon>Bacteroidales</taxon>
        <taxon>Bacteroidaceae</taxon>
        <taxon>Bacteroides</taxon>
    </lineage>
</organism>
<sequence length="565" mass="63833">MEQKIKFPRSQKVYLPGKLYPNIRVAMRKVEQVPSVSFEGEEKIATPNPEVYVYDTSGPFSDPSMSIDLKKGLPRLREEWIVGRGDVEQLPEITSEYGQMRRDDKSLDHLRFEHIALPYRAKKGEAITQMAYAKRGIITPEMEYVAIRENMNCEELGIETHITPEFVRKEIAEGHAVLPANINHPEAEPMIIGRNFLVKINTNIGNSATTSSIDEEVEKALWSCKWGGDTLMDLSTGENIHETREWIIRNCPVPVGTVPIYQALEKVNGVVEDLNWEIYRDTLIEQCEQGVDYFTIHAGIRRHNVHLADKRLCGIVSRGGSIMSKWCLVHDQESFLYEHFDDICDILAQYDVAVSLGDGLRPGSIHDANDEAQFAELDTMGELVLRAWEKNVQAFIEGPGHVPMHKIKENMERQIEKCHDAPFYTLGPLVTDIAPGYDHITSAIGAAQIGWLGTAMLCYVTPKEHLALPDKEDVRVGVITYKIAAHAADLAKGHPGAQVRDNALSKARYEFRWKDQFDLSLDPERAQGYFRAGHHIDGEYCTMCGPNFCAMRLSRDLKKNAKSDK</sequence>
<reference key="1">
    <citation type="journal article" date="2003" name="Science">
        <title>A genomic view of the human-Bacteroides thetaiotaomicron symbiosis.</title>
        <authorList>
            <person name="Xu J."/>
            <person name="Bjursell M.K."/>
            <person name="Himrod J."/>
            <person name="Deng S."/>
            <person name="Carmichael L.K."/>
            <person name="Chiang H.C."/>
            <person name="Hooper L.V."/>
            <person name="Gordon J.I."/>
        </authorList>
    </citation>
    <scope>NUCLEOTIDE SEQUENCE [LARGE SCALE GENOMIC DNA]</scope>
    <source>
        <strain>ATCC 29148 / DSM 2079 / JCM 5827 / CCUG 10774 / NCTC 10582 / VPI-5482 / E50</strain>
    </source>
</reference>